<protein>
    <recommendedName>
        <fullName evidence="1">Large ribosomal subunit protein uL14</fullName>
    </recommendedName>
    <alternativeName>
        <fullName evidence="2">50S ribosomal protein L14</fullName>
    </alternativeName>
</protein>
<feature type="chain" id="PRO_1000087135" description="Large ribosomal subunit protein uL14">
    <location>
        <begin position="1"/>
        <end position="122"/>
    </location>
</feature>
<organism>
    <name type="scientific">Microcystis aeruginosa (strain NIES-843 / IAM M-2473)</name>
    <dbReference type="NCBI Taxonomy" id="449447"/>
    <lineage>
        <taxon>Bacteria</taxon>
        <taxon>Bacillati</taxon>
        <taxon>Cyanobacteriota</taxon>
        <taxon>Cyanophyceae</taxon>
        <taxon>Oscillatoriophycideae</taxon>
        <taxon>Chroococcales</taxon>
        <taxon>Microcystaceae</taxon>
        <taxon>Microcystis</taxon>
    </lineage>
</organism>
<name>RL14_MICAN</name>
<proteinExistence type="inferred from homology"/>
<evidence type="ECO:0000255" key="1">
    <source>
        <dbReference type="HAMAP-Rule" id="MF_01367"/>
    </source>
</evidence>
<evidence type="ECO:0000305" key="2"/>
<dbReference type="EMBL" id="AP009552">
    <property type="protein sequence ID" value="BAG05555.1"/>
    <property type="molecule type" value="Genomic_DNA"/>
</dbReference>
<dbReference type="RefSeq" id="WP_002732358.1">
    <property type="nucleotide sequence ID" value="NC_010296.1"/>
</dbReference>
<dbReference type="SMR" id="B0JHZ3"/>
<dbReference type="STRING" id="449447.MAE_57330"/>
<dbReference type="PaxDb" id="449447-MAE_57330"/>
<dbReference type="EnsemblBacteria" id="BAG05555">
    <property type="protein sequence ID" value="BAG05555"/>
    <property type="gene ID" value="MAE_57330"/>
</dbReference>
<dbReference type="GeneID" id="66707891"/>
<dbReference type="KEGG" id="mar:MAE_57330"/>
<dbReference type="eggNOG" id="COG0093">
    <property type="taxonomic scope" value="Bacteria"/>
</dbReference>
<dbReference type="HOGENOM" id="CLU_095071_2_1_3"/>
<dbReference type="BioCyc" id="MAER449447:MAE_RS24980-MONOMER"/>
<dbReference type="Proteomes" id="UP000001510">
    <property type="component" value="Chromosome"/>
</dbReference>
<dbReference type="GO" id="GO:0022625">
    <property type="term" value="C:cytosolic large ribosomal subunit"/>
    <property type="evidence" value="ECO:0007669"/>
    <property type="project" value="TreeGrafter"/>
</dbReference>
<dbReference type="GO" id="GO:0070180">
    <property type="term" value="F:large ribosomal subunit rRNA binding"/>
    <property type="evidence" value="ECO:0007669"/>
    <property type="project" value="TreeGrafter"/>
</dbReference>
<dbReference type="GO" id="GO:0003735">
    <property type="term" value="F:structural constituent of ribosome"/>
    <property type="evidence" value="ECO:0007669"/>
    <property type="project" value="InterPro"/>
</dbReference>
<dbReference type="GO" id="GO:0006412">
    <property type="term" value="P:translation"/>
    <property type="evidence" value="ECO:0007669"/>
    <property type="project" value="UniProtKB-UniRule"/>
</dbReference>
<dbReference type="CDD" id="cd00337">
    <property type="entry name" value="Ribosomal_uL14"/>
    <property type="match status" value="1"/>
</dbReference>
<dbReference type="FunFam" id="2.40.150.20:FF:000001">
    <property type="entry name" value="50S ribosomal protein L14"/>
    <property type="match status" value="1"/>
</dbReference>
<dbReference type="Gene3D" id="2.40.150.20">
    <property type="entry name" value="Ribosomal protein L14"/>
    <property type="match status" value="1"/>
</dbReference>
<dbReference type="HAMAP" id="MF_01367">
    <property type="entry name" value="Ribosomal_uL14"/>
    <property type="match status" value="1"/>
</dbReference>
<dbReference type="InterPro" id="IPR000218">
    <property type="entry name" value="Ribosomal_uL14"/>
</dbReference>
<dbReference type="InterPro" id="IPR005745">
    <property type="entry name" value="Ribosomal_uL14_bac-type"/>
</dbReference>
<dbReference type="InterPro" id="IPR019972">
    <property type="entry name" value="Ribosomal_uL14_CS"/>
</dbReference>
<dbReference type="InterPro" id="IPR036853">
    <property type="entry name" value="Ribosomal_uL14_sf"/>
</dbReference>
<dbReference type="NCBIfam" id="TIGR01067">
    <property type="entry name" value="rplN_bact"/>
    <property type="match status" value="1"/>
</dbReference>
<dbReference type="PANTHER" id="PTHR11761">
    <property type="entry name" value="50S/60S RIBOSOMAL PROTEIN L14/L23"/>
    <property type="match status" value="1"/>
</dbReference>
<dbReference type="PANTHER" id="PTHR11761:SF3">
    <property type="entry name" value="LARGE RIBOSOMAL SUBUNIT PROTEIN UL14M"/>
    <property type="match status" value="1"/>
</dbReference>
<dbReference type="Pfam" id="PF00238">
    <property type="entry name" value="Ribosomal_L14"/>
    <property type="match status" value="1"/>
</dbReference>
<dbReference type="SMART" id="SM01374">
    <property type="entry name" value="Ribosomal_L14"/>
    <property type="match status" value="1"/>
</dbReference>
<dbReference type="SUPFAM" id="SSF50193">
    <property type="entry name" value="Ribosomal protein L14"/>
    <property type="match status" value="1"/>
</dbReference>
<dbReference type="PROSITE" id="PS00049">
    <property type="entry name" value="RIBOSOMAL_L14"/>
    <property type="match status" value="1"/>
</dbReference>
<comment type="function">
    <text evidence="1">Binds to 23S rRNA. Forms part of two intersubunit bridges in the 70S ribosome.</text>
</comment>
<comment type="subunit">
    <text evidence="1">Part of the 50S ribosomal subunit. Forms a cluster with proteins L3 and L19. In the 70S ribosome, L14 and L19 interact and together make contacts with the 16S rRNA in bridges B5 and B8.</text>
</comment>
<comment type="similarity">
    <text evidence="1">Belongs to the universal ribosomal protein uL14 family.</text>
</comment>
<sequence length="122" mass="13304">MIQQQTYLNVADNSGARKLMCLRVLGTGNCTYGGIGDKIIAVVKDAIPNMPVKKSDVVTAVIVRTRQTVRRDSGMSIRFDDNAAVIINNDGNPKGTRVFGPVARELRDKNYTKIVSLAPEVL</sequence>
<reference key="1">
    <citation type="journal article" date="2007" name="DNA Res.">
        <title>Complete genomic structure of the bloom-forming toxic cyanobacterium Microcystis aeruginosa NIES-843.</title>
        <authorList>
            <person name="Kaneko T."/>
            <person name="Nakajima N."/>
            <person name="Okamoto S."/>
            <person name="Suzuki I."/>
            <person name="Tanabe Y."/>
            <person name="Tamaoki M."/>
            <person name="Nakamura Y."/>
            <person name="Kasai F."/>
            <person name="Watanabe A."/>
            <person name="Kawashima K."/>
            <person name="Kishida Y."/>
            <person name="Ono A."/>
            <person name="Shimizu Y."/>
            <person name="Takahashi C."/>
            <person name="Minami C."/>
            <person name="Fujishiro T."/>
            <person name="Kohara M."/>
            <person name="Katoh M."/>
            <person name="Nakazaki N."/>
            <person name="Nakayama S."/>
            <person name="Yamada M."/>
            <person name="Tabata S."/>
            <person name="Watanabe M.M."/>
        </authorList>
    </citation>
    <scope>NUCLEOTIDE SEQUENCE [LARGE SCALE GENOMIC DNA]</scope>
    <source>
        <strain>NIES-843 / IAM M-247</strain>
    </source>
</reference>
<keyword id="KW-0687">Ribonucleoprotein</keyword>
<keyword id="KW-0689">Ribosomal protein</keyword>
<keyword id="KW-0694">RNA-binding</keyword>
<keyword id="KW-0699">rRNA-binding</keyword>
<gene>
    <name evidence="1" type="primary">rplN</name>
    <name evidence="1" type="synonym">rpl14</name>
    <name type="ordered locus">MAE_57330</name>
</gene>
<accession>B0JHZ3</accession>